<reference key="1">
    <citation type="journal article" date="2007" name="PLoS Genet.">
        <title>The complete genome sequence of Yersinia pseudotuberculosis IP31758, the causative agent of Far East scarlet-like fever.</title>
        <authorList>
            <person name="Eppinger M."/>
            <person name="Rosovitz M.J."/>
            <person name="Fricke W.F."/>
            <person name="Rasko D.A."/>
            <person name="Kokorina G."/>
            <person name="Fayolle C."/>
            <person name="Lindler L.E."/>
            <person name="Carniel E."/>
            <person name="Ravel J."/>
        </authorList>
    </citation>
    <scope>NUCLEOTIDE SEQUENCE [LARGE SCALE GENOMIC DNA]</scope>
    <source>
        <strain>IP 31758</strain>
    </source>
</reference>
<keyword id="KW-0255">Endonuclease</keyword>
<keyword id="KW-0378">Hydrolase</keyword>
<keyword id="KW-0540">Nuclease</keyword>
<keyword id="KW-0694">RNA-binding</keyword>
<keyword id="KW-0819">tRNA processing</keyword>
<proteinExistence type="inferred from homology"/>
<evidence type="ECO:0000255" key="1">
    <source>
        <dbReference type="HAMAP-Rule" id="MF_00227"/>
    </source>
</evidence>
<organism>
    <name type="scientific">Yersinia pseudotuberculosis serotype O:1b (strain IP 31758)</name>
    <dbReference type="NCBI Taxonomy" id="349747"/>
    <lineage>
        <taxon>Bacteria</taxon>
        <taxon>Pseudomonadati</taxon>
        <taxon>Pseudomonadota</taxon>
        <taxon>Gammaproteobacteria</taxon>
        <taxon>Enterobacterales</taxon>
        <taxon>Yersiniaceae</taxon>
        <taxon>Yersinia</taxon>
    </lineage>
</organism>
<dbReference type="EC" id="3.1.26.5" evidence="1"/>
<dbReference type="EMBL" id="CP000720">
    <property type="protein sequence ID" value="ABS46327.1"/>
    <property type="molecule type" value="Genomic_DNA"/>
</dbReference>
<dbReference type="RefSeq" id="WP_002228153.1">
    <property type="nucleotide sequence ID" value="NC_009708.1"/>
</dbReference>
<dbReference type="SMR" id="A7FPB9"/>
<dbReference type="GeneID" id="57974623"/>
<dbReference type="KEGG" id="ypi:YpsIP31758_4155"/>
<dbReference type="HOGENOM" id="CLU_117179_11_0_6"/>
<dbReference type="Proteomes" id="UP000002412">
    <property type="component" value="Chromosome"/>
</dbReference>
<dbReference type="GO" id="GO:0030677">
    <property type="term" value="C:ribonuclease P complex"/>
    <property type="evidence" value="ECO:0007669"/>
    <property type="project" value="TreeGrafter"/>
</dbReference>
<dbReference type="GO" id="GO:0042781">
    <property type="term" value="F:3'-tRNA processing endoribonuclease activity"/>
    <property type="evidence" value="ECO:0007669"/>
    <property type="project" value="TreeGrafter"/>
</dbReference>
<dbReference type="GO" id="GO:0004526">
    <property type="term" value="F:ribonuclease P activity"/>
    <property type="evidence" value="ECO:0007669"/>
    <property type="project" value="UniProtKB-UniRule"/>
</dbReference>
<dbReference type="GO" id="GO:0000049">
    <property type="term" value="F:tRNA binding"/>
    <property type="evidence" value="ECO:0007669"/>
    <property type="project" value="UniProtKB-UniRule"/>
</dbReference>
<dbReference type="GO" id="GO:0001682">
    <property type="term" value="P:tRNA 5'-leader removal"/>
    <property type="evidence" value="ECO:0007669"/>
    <property type="project" value="UniProtKB-UniRule"/>
</dbReference>
<dbReference type="FunFam" id="3.30.230.10:FF:000016">
    <property type="entry name" value="Ribonuclease P protein component"/>
    <property type="match status" value="1"/>
</dbReference>
<dbReference type="Gene3D" id="3.30.230.10">
    <property type="match status" value="1"/>
</dbReference>
<dbReference type="HAMAP" id="MF_00227">
    <property type="entry name" value="RNase_P"/>
    <property type="match status" value="1"/>
</dbReference>
<dbReference type="InterPro" id="IPR020568">
    <property type="entry name" value="Ribosomal_Su5_D2-typ_SF"/>
</dbReference>
<dbReference type="InterPro" id="IPR014721">
    <property type="entry name" value="Ribsml_uS5_D2-typ_fold_subgr"/>
</dbReference>
<dbReference type="InterPro" id="IPR000100">
    <property type="entry name" value="RNase_P"/>
</dbReference>
<dbReference type="InterPro" id="IPR020539">
    <property type="entry name" value="RNase_P_CS"/>
</dbReference>
<dbReference type="NCBIfam" id="TIGR00188">
    <property type="entry name" value="rnpA"/>
    <property type="match status" value="1"/>
</dbReference>
<dbReference type="PANTHER" id="PTHR33992">
    <property type="entry name" value="RIBONUCLEASE P PROTEIN COMPONENT"/>
    <property type="match status" value="1"/>
</dbReference>
<dbReference type="PANTHER" id="PTHR33992:SF1">
    <property type="entry name" value="RIBONUCLEASE P PROTEIN COMPONENT"/>
    <property type="match status" value="1"/>
</dbReference>
<dbReference type="Pfam" id="PF00825">
    <property type="entry name" value="Ribonuclease_P"/>
    <property type="match status" value="1"/>
</dbReference>
<dbReference type="SUPFAM" id="SSF54211">
    <property type="entry name" value="Ribosomal protein S5 domain 2-like"/>
    <property type="match status" value="1"/>
</dbReference>
<dbReference type="PROSITE" id="PS00648">
    <property type="entry name" value="RIBONUCLEASE_P"/>
    <property type="match status" value="1"/>
</dbReference>
<gene>
    <name evidence="1" type="primary">rnpA</name>
    <name type="ordered locus">YpsIP31758_4155</name>
</gene>
<accession>A7FPB9</accession>
<sequence length="119" mass="13800">MVKLAFPRELRLLTPSHFTFVFQQPQRAGTPQITILGRLNELGHPRIGLTVAKKHVKRAHERNRIKRLTRESFRLHQHALPSMDFVVLVKKGVADLDNRALTEALEKLWRRHCRQAPAS</sequence>
<protein>
    <recommendedName>
        <fullName evidence="1">Ribonuclease P protein component</fullName>
        <shortName evidence="1">RNase P protein</shortName>
        <shortName evidence="1">RNaseP protein</shortName>
        <ecNumber evidence="1">3.1.26.5</ecNumber>
    </recommendedName>
    <alternativeName>
        <fullName evidence="1">Protein C5</fullName>
    </alternativeName>
</protein>
<name>RNPA_YERP3</name>
<feature type="chain" id="PRO_1000058755" description="Ribonuclease P protein component">
    <location>
        <begin position="1"/>
        <end position="119"/>
    </location>
</feature>
<comment type="function">
    <text evidence="1">RNaseP catalyzes the removal of the 5'-leader sequence from pre-tRNA to produce the mature 5'-terminus. It can also cleave other RNA substrates such as 4.5S RNA. The protein component plays an auxiliary but essential role in vivo by binding to the 5'-leader sequence and broadening the substrate specificity of the ribozyme.</text>
</comment>
<comment type="catalytic activity">
    <reaction evidence="1">
        <text>Endonucleolytic cleavage of RNA, removing 5'-extranucleotides from tRNA precursor.</text>
        <dbReference type="EC" id="3.1.26.5"/>
    </reaction>
</comment>
<comment type="subunit">
    <text evidence="1">Consists of a catalytic RNA component (M1 or rnpB) and a protein subunit.</text>
</comment>
<comment type="similarity">
    <text evidence="1">Belongs to the RnpA family.</text>
</comment>